<dbReference type="EMBL" id="CP000046">
    <property type="protein sequence ID" value="AAW38493.1"/>
    <property type="molecule type" value="Genomic_DNA"/>
</dbReference>
<dbReference type="RefSeq" id="WP_001030825.1">
    <property type="nucleotide sequence ID" value="NZ_JBGOFO010000004.1"/>
</dbReference>
<dbReference type="SMR" id="Q5HDS7"/>
<dbReference type="KEGG" id="sac:SACOL2273"/>
<dbReference type="HOGENOM" id="CLU_056887_4_1_9"/>
<dbReference type="Proteomes" id="UP000000530">
    <property type="component" value="Chromosome"/>
</dbReference>
<dbReference type="GO" id="GO:0005737">
    <property type="term" value="C:cytoplasm"/>
    <property type="evidence" value="ECO:0007669"/>
    <property type="project" value="UniProtKB-SubCell"/>
</dbReference>
<dbReference type="GO" id="GO:0097163">
    <property type="term" value="F:sulfur carrier activity"/>
    <property type="evidence" value="ECO:0007669"/>
    <property type="project" value="UniProtKB-UniRule"/>
</dbReference>
<dbReference type="GO" id="GO:0016783">
    <property type="term" value="F:sulfurtransferase activity"/>
    <property type="evidence" value="ECO:0007669"/>
    <property type="project" value="InterPro"/>
</dbReference>
<dbReference type="GO" id="GO:0006777">
    <property type="term" value="P:Mo-molybdopterin cofactor biosynthetic process"/>
    <property type="evidence" value="ECO:0007669"/>
    <property type="project" value="UniProtKB-UniRule"/>
</dbReference>
<dbReference type="Gene3D" id="3.10.20.10">
    <property type="match status" value="1"/>
</dbReference>
<dbReference type="Gene3D" id="3.40.140.10">
    <property type="entry name" value="Cytidine Deaminase, domain 2"/>
    <property type="match status" value="1"/>
</dbReference>
<dbReference type="HAMAP" id="MF_00187">
    <property type="entry name" value="FdhD"/>
    <property type="match status" value="1"/>
</dbReference>
<dbReference type="InterPro" id="IPR016193">
    <property type="entry name" value="Cytidine_deaminase-like"/>
</dbReference>
<dbReference type="InterPro" id="IPR003786">
    <property type="entry name" value="FdhD"/>
</dbReference>
<dbReference type="NCBIfam" id="TIGR00129">
    <property type="entry name" value="fdhD_narQ"/>
    <property type="match status" value="1"/>
</dbReference>
<dbReference type="PANTHER" id="PTHR30592">
    <property type="entry name" value="FORMATE DEHYDROGENASE"/>
    <property type="match status" value="1"/>
</dbReference>
<dbReference type="PANTHER" id="PTHR30592:SF1">
    <property type="entry name" value="SULFUR CARRIER PROTEIN FDHD"/>
    <property type="match status" value="1"/>
</dbReference>
<dbReference type="Pfam" id="PF02634">
    <property type="entry name" value="FdhD-NarQ"/>
    <property type="match status" value="1"/>
</dbReference>
<dbReference type="PIRSF" id="PIRSF015626">
    <property type="entry name" value="FdhD"/>
    <property type="match status" value="1"/>
</dbReference>
<dbReference type="SUPFAM" id="SSF53927">
    <property type="entry name" value="Cytidine deaminase-like"/>
    <property type="match status" value="1"/>
</dbReference>
<proteinExistence type="inferred from homology"/>
<comment type="function">
    <text evidence="1">Required for formate dehydrogenase (FDH) activity. Acts as a sulfur carrier protein that transfers sulfur from IscS to the molybdenum cofactor prior to its insertion into FDH.</text>
</comment>
<comment type="subcellular location">
    <subcellularLocation>
        <location evidence="1">Cytoplasm</location>
    </subcellularLocation>
</comment>
<comment type="similarity">
    <text evidence="1">Belongs to the FdhD family.</text>
</comment>
<feature type="chain" id="PRO_0000152922" description="Sulfur carrier protein FdhD">
    <location>
        <begin position="1"/>
        <end position="265"/>
    </location>
</feature>
<feature type="active site" description="Cysteine persulfide intermediate" evidence="1">
    <location>
        <position position="107"/>
    </location>
</feature>
<organism>
    <name type="scientific">Staphylococcus aureus (strain COL)</name>
    <dbReference type="NCBI Taxonomy" id="93062"/>
    <lineage>
        <taxon>Bacteria</taxon>
        <taxon>Bacillati</taxon>
        <taxon>Bacillota</taxon>
        <taxon>Bacilli</taxon>
        <taxon>Bacillales</taxon>
        <taxon>Staphylococcaceae</taxon>
        <taxon>Staphylococcus</taxon>
    </lineage>
</organism>
<evidence type="ECO:0000255" key="1">
    <source>
        <dbReference type="HAMAP-Rule" id="MF_00187"/>
    </source>
</evidence>
<gene>
    <name evidence="1" type="primary">fdhD</name>
    <name type="ordered locus">SACOL2273</name>
</gene>
<sequence length="265" mass="29416">MNKDVSLGQPIVRYEDGKLFNTTDQYVTEFPLTIMVNGEEFATVICSPTNLEELVIGFLASEGAILKRDELKSVLIDDSKGFAHVELNKDLGDRFQYSTKRMIASCCGKSREFYFQNDAAIAKTSMSKITLTPMQIINMMTRLQSASHIYQETGGLHNAAISDGLTFFVHRQDIGRHNALDKLYGFCIQRHITVRDKVLIFSGRISSEILIKAAKIGVGVILSKSAPTTLAVTLANDLNITAVGFIRNGGFNIYSHPERIIDSEQ</sequence>
<protein>
    <recommendedName>
        <fullName evidence="1">Sulfur carrier protein FdhD</fullName>
    </recommendedName>
</protein>
<accession>Q5HDS7</accession>
<name>FDHD_STAAC</name>
<reference key="1">
    <citation type="journal article" date="2005" name="J. Bacteriol.">
        <title>Insights on evolution of virulence and resistance from the complete genome analysis of an early methicillin-resistant Staphylococcus aureus strain and a biofilm-producing methicillin-resistant Staphylococcus epidermidis strain.</title>
        <authorList>
            <person name="Gill S.R."/>
            <person name="Fouts D.E."/>
            <person name="Archer G.L."/>
            <person name="Mongodin E.F."/>
            <person name="DeBoy R.T."/>
            <person name="Ravel J."/>
            <person name="Paulsen I.T."/>
            <person name="Kolonay J.F."/>
            <person name="Brinkac L.M."/>
            <person name="Beanan M.J."/>
            <person name="Dodson R.J."/>
            <person name="Daugherty S.C."/>
            <person name="Madupu R."/>
            <person name="Angiuoli S.V."/>
            <person name="Durkin A.S."/>
            <person name="Haft D.H."/>
            <person name="Vamathevan J.J."/>
            <person name="Khouri H."/>
            <person name="Utterback T.R."/>
            <person name="Lee C."/>
            <person name="Dimitrov G."/>
            <person name="Jiang L."/>
            <person name="Qin H."/>
            <person name="Weidman J."/>
            <person name="Tran K."/>
            <person name="Kang K.H."/>
            <person name="Hance I.R."/>
            <person name="Nelson K.E."/>
            <person name="Fraser C.M."/>
        </authorList>
    </citation>
    <scope>NUCLEOTIDE SEQUENCE [LARGE SCALE GENOMIC DNA]</scope>
    <source>
        <strain>COL</strain>
    </source>
</reference>
<keyword id="KW-0963">Cytoplasm</keyword>
<keyword id="KW-0501">Molybdenum cofactor biosynthesis</keyword>